<protein>
    <recommendedName>
        <fullName evidence="1">Protein translocase subunit SecE</fullName>
    </recommendedName>
    <alternativeName>
        <fullName evidence="1">Protein transport protein Sec61 gamma subunit homolog</fullName>
    </alternativeName>
</protein>
<comment type="function">
    <text evidence="1">Essential subunit of the Sec protein translocation channel SecYEG. Clamps together the 2 halves of SecY. May contact the channel plug during translocation.</text>
</comment>
<comment type="subunit">
    <text evidence="1">Component of the Sec protein translocase complex. Heterotrimer consisting of SecY (alpha), SecG (beta) and SecE (gamma) subunits. The heterotrimers can form oligomers, although 1 heterotrimer is thought to be able to translocate proteins. Interacts with the ribosome. May interact with SecDF, and other proteins may be involved.</text>
</comment>
<comment type="subcellular location">
    <subcellularLocation>
        <location evidence="1">Cell membrane</location>
        <topology evidence="1">Single-pass membrane protein</topology>
    </subcellularLocation>
</comment>
<comment type="similarity">
    <text evidence="1">Belongs to the SecE/SEC61-gamma family.</text>
</comment>
<accession>Q8PY55</accession>
<reference key="1">
    <citation type="journal article" date="2002" name="J. Mol. Microbiol. Biotechnol.">
        <title>The genome of Methanosarcina mazei: evidence for lateral gene transfer between Bacteria and Archaea.</title>
        <authorList>
            <person name="Deppenmeier U."/>
            <person name="Johann A."/>
            <person name="Hartsch T."/>
            <person name="Merkl R."/>
            <person name="Schmitz R.A."/>
            <person name="Martinez-Arias R."/>
            <person name="Henne A."/>
            <person name="Wiezer A."/>
            <person name="Baeumer S."/>
            <person name="Jacobi C."/>
            <person name="Brueggemann H."/>
            <person name="Lienard T."/>
            <person name="Christmann A."/>
            <person name="Boemecke M."/>
            <person name="Steckel S."/>
            <person name="Bhattacharyya A."/>
            <person name="Lykidis A."/>
            <person name="Overbeek R."/>
            <person name="Klenk H.-P."/>
            <person name="Gunsalus R.P."/>
            <person name="Fritz H.-J."/>
            <person name="Gottschalk G."/>
        </authorList>
    </citation>
    <scope>NUCLEOTIDE SEQUENCE [LARGE SCALE GENOMIC DNA]</scope>
    <source>
        <strain>ATCC BAA-159 / DSM 3647 / Goe1 / Go1 / JCM 11833 / OCM 88</strain>
    </source>
</reference>
<sequence>MVESALEPNITTKSVGQAIRAHLRVLKLTKKPSREEFLTIAKVAGAGILAVGAVGFIIYVLLTMLPQWVAK</sequence>
<feature type="chain" id="PRO_0000104221" description="Protein translocase subunit SecE">
    <location>
        <begin position="1"/>
        <end position="71"/>
    </location>
</feature>
<feature type="transmembrane region" description="Helical" evidence="1">
    <location>
        <begin position="43"/>
        <end position="63"/>
    </location>
</feature>
<organism>
    <name type="scientific">Methanosarcina mazei (strain ATCC BAA-159 / DSM 3647 / Goe1 / Go1 / JCM 11833 / OCM 88)</name>
    <name type="common">Methanosarcina frisia</name>
    <dbReference type="NCBI Taxonomy" id="192952"/>
    <lineage>
        <taxon>Archaea</taxon>
        <taxon>Methanobacteriati</taxon>
        <taxon>Methanobacteriota</taxon>
        <taxon>Stenosarchaea group</taxon>
        <taxon>Methanomicrobia</taxon>
        <taxon>Methanosarcinales</taxon>
        <taxon>Methanosarcinaceae</taxon>
        <taxon>Methanosarcina</taxon>
    </lineage>
</organism>
<proteinExistence type="inferred from homology"/>
<gene>
    <name evidence="1" type="primary">secE</name>
    <name type="ordered locus">MM_1009</name>
</gene>
<name>SECE_METMA</name>
<dbReference type="EMBL" id="AE008384">
    <property type="protein sequence ID" value="AAM30705.1"/>
    <property type="molecule type" value="Genomic_DNA"/>
</dbReference>
<dbReference type="RefSeq" id="WP_011032958.1">
    <property type="nucleotide sequence ID" value="NC_003901.1"/>
</dbReference>
<dbReference type="SMR" id="Q8PY55"/>
<dbReference type="KEGG" id="mma:MM_1009"/>
<dbReference type="PATRIC" id="fig|192952.21.peg.1183"/>
<dbReference type="eggNOG" id="arCOG02204">
    <property type="taxonomic scope" value="Archaea"/>
</dbReference>
<dbReference type="HOGENOM" id="CLU_191921_2_1_2"/>
<dbReference type="Proteomes" id="UP000000595">
    <property type="component" value="Chromosome"/>
</dbReference>
<dbReference type="GO" id="GO:0005886">
    <property type="term" value="C:plasma membrane"/>
    <property type="evidence" value="ECO:0007669"/>
    <property type="project" value="UniProtKB-SubCell"/>
</dbReference>
<dbReference type="GO" id="GO:0008320">
    <property type="term" value="F:protein transmembrane transporter activity"/>
    <property type="evidence" value="ECO:0007669"/>
    <property type="project" value="UniProtKB-UniRule"/>
</dbReference>
<dbReference type="GO" id="GO:0065002">
    <property type="term" value="P:intracellular protein transmembrane transport"/>
    <property type="evidence" value="ECO:0007669"/>
    <property type="project" value="UniProtKB-UniRule"/>
</dbReference>
<dbReference type="GO" id="GO:0009306">
    <property type="term" value="P:protein secretion"/>
    <property type="evidence" value="ECO:0007669"/>
    <property type="project" value="UniProtKB-UniRule"/>
</dbReference>
<dbReference type="GO" id="GO:0006605">
    <property type="term" value="P:protein targeting"/>
    <property type="evidence" value="ECO:0007669"/>
    <property type="project" value="UniProtKB-UniRule"/>
</dbReference>
<dbReference type="Gene3D" id="1.20.5.820">
    <property type="entry name" value="Preprotein translocase SecE subunit"/>
    <property type="match status" value="1"/>
</dbReference>
<dbReference type="HAMAP" id="MF_00422">
    <property type="entry name" value="SecE"/>
    <property type="match status" value="1"/>
</dbReference>
<dbReference type="InterPro" id="IPR023391">
    <property type="entry name" value="Prot_translocase_SecE_dom_sf"/>
</dbReference>
<dbReference type="InterPro" id="IPR008158">
    <property type="entry name" value="Translocase_Sec61-g"/>
</dbReference>
<dbReference type="InterPro" id="IPR001901">
    <property type="entry name" value="Translocase_SecE/Sec61-g"/>
</dbReference>
<dbReference type="NCBIfam" id="NF006908">
    <property type="entry name" value="PRK09400.1-3"/>
    <property type="match status" value="1"/>
</dbReference>
<dbReference type="NCBIfam" id="TIGR00327">
    <property type="entry name" value="secE_euk_arch"/>
    <property type="match status" value="1"/>
</dbReference>
<dbReference type="Pfam" id="PF00584">
    <property type="entry name" value="SecE"/>
    <property type="match status" value="1"/>
</dbReference>
<dbReference type="SUPFAM" id="SSF103456">
    <property type="entry name" value="Preprotein translocase SecE subunit"/>
    <property type="match status" value="1"/>
</dbReference>
<keyword id="KW-1003">Cell membrane</keyword>
<keyword id="KW-0472">Membrane</keyword>
<keyword id="KW-0653">Protein transport</keyword>
<keyword id="KW-0811">Translocation</keyword>
<keyword id="KW-0812">Transmembrane</keyword>
<keyword id="KW-1133">Transmembrane helix</keyword>
<keyword id="KW-0813">Transport</keyword>
<evidence type="ECO:0000255" key="1">
    <source>
        <dbReference type="HAMAP-Rule" id="MF_00422"/>
    </source>
</evidence>